<feature type="chain" id="PRO_0000400203" description="1D-myo-inositol 2-acetamido-2-deoxy-alpha-D-glucopyranoside deacetylase">
    <location>
        <begin position="1"/>
        <end position="308"/>
    </location>
</feature>
<feature type="binding site" evidence="1">
    <location>
        <position position="37"/>
    </location>
    <ligand>
        <name>Zn(2+)</name>
        <dbReference type="ChEBI" id="CHEBI:29105"/>
    </ligand>
</feature>
<feature type="binding site" evidence="1">
    <location>
        <position position="40"/>
    </location>
    <ligand>
        <name>Zn(2+)</name>
        <dbReference type="ChEBI" id="CHEBI:29105"/>
    </ligand>
</feature>
<feature type="binding site" evidence="1">
    <location>
        <position position="171"/>
    </location>
    <ligand>
        <name>Zn(2+)</name>
        <dbReference type="ChEBI" id="CHEBI:29105"/>
    </ligand>
</feature>
<sequence>MFADSAVACVISALRAVGVDSPLMSELVPRLLFVHAHPDDETLTTGGTIAHYVRRGADVRVVTCTLGEEGEVIGEQYAQLAVDHADQLGGYRIAELTAALAALGVDAPHFLGGPGHWRDSGMADTPARHQPRFVDADMAEAAGLLAAILDDFRPHVVVTYDPDGGYGHPDHVQTHRVTTAAVERAQWQVPKFYWTVMSRSGMGDAFAVARDVPEEWLQVSVDDVPFLYTDDRIDAVVDVSDSIEAKVAAMRAHATQISVAANGQSCALSNNIAMPIPGVEHYVLVSGAPGPRDARGWETDLLAGVNLA</sequence>
<proteinExistence type="inferred from homology"/>
<name>MSHB_MYCSK</name>
<organism>
    <name type="scientific">Mycobacterium sp. (strain KMS)</name>
    <dbReference type="NCBI Taxonomy" id="189918"/>
    <lineage>
        <taxon>Bacteria</taxon>
        <taxon>Bacillati</taxon>
        <taxon>Actinomycetota</taxon>
        <taxon>Actinomycetes</taxon>
        <taxon>Mycobacteriales</taxon>
        <taxon>Mycobacteriaceae</taxon>
        <taxon>Mycobacterium</taxon>
    </lineage>
</organism>
<reference key="1">
    <citation type="submission" date="2006-12" db="EMBL/GenBank/DDBJ databases">
        <title>Complete sequence of chromosome of Mycobacterium sp. KMS.</title>
        <authorList>
            <consortium name="US DOE Joint Genome Institute"/>
            <person name="Copeland A."/>
            <person name="Lucas S."/>
            <person name="Lapidus A."/>
            <person name="Barry K."/>
            <person name="Detter J.C."/>
            <person name="Glavina del Rio T."/>
            <person name="Hammon N."/>
            <person name="Israni S."/>
            <person name="Dalin E."/>
            <person name="Tice H."/>
            <person name="Pitluck S."/>
            <person name="Kiss H."/>
            <person name="Brettin T."/>
            <person name="Bruce D."/>
            <person name="Han C."/>
            <person name="Tapia R."/>
            <person name="Gilna P."/>
            <person name="Schmutz J."/>
            <person name="Larimer F."/>
            <person name="Land M."/>
            <person name="Hauser L."/>
            <person name="Kyrpides N."/>
            <person name="Mikhailova N."/>
            <person name="Miller C.D."/>
            <person name="Richardson P."/>
        </authorList>
    </citation>
    <scope>NUCLEOTIDE SEQUENCE [LARGE SCALE GENOMIC DNA]</scope>
    <source>
        <strain>KMS</strain>
    </source>
</reference>
<evidence type="ECO:0000255" key="1">
    <source>
        <dbReference type="HAMAP-Rule" id="MF_01696"/>
    </source>
</evidence>
<gene>
    <name evidence="1" type="primary">mshB</name>
    <name type="ordered locus">Mkms_4109</name>
</gene>
<comment type="function">
    <text evidence="1">Catalyzes the deacetylation of 1D-myo-inositol 2-acetamido-2-deoxy-alpha-D-glucopyranoside (GlcNAc-Ins) in the mycothiol biosynthesis pathway.</text>
</comment>
<comment type="catalytic activity">
    <reaction evidence="1">
        <text>1D-myo-inositol 2-acetamido-2-deoxy-alpha-D-glucopyranoside + H2O = 1D-myo-inositol 2-amino-2-deoxy-alpha-D-glucopyranoside + acetate</text>
        <dbReference type="Rhea" id="RHEA:26180"/>
        <dbReference type="ChEBI" id="CHEBI:15377"/>
        <dbReference type="ChEBI" id="CHEBI:30089"/>
        <dbReference type="ChEBI" id="CHEBI:52442"/>
        <dbReference type="ChEBI" id="CHEBI:58886"/>
        <dbReference type="EC" id="3.5.1.103"/>
    </reaction>
</comment>
<comment type="cofactor">
    <cofactor evidence="1">
        <name>Zn(2+)</name>
        <dbReference type="ChEBI" id="CHEBI:29105"/>
    </cofactor>
    <text evidence="1">Binds 1 zinc ion per subunit.</text>
</comment>
<comment type="similarity">
    <text evidence="1">Belongs to the MshB deacetylase family.</text>
</comment>
<keyword id="KW-0378">Hydrolase</keyword>
<keyword id="KW-0479">Metal-binding</keyword>
<keyword id="KW-0862">Zinc</keyword>
<protein>
    <recommendedName>
        <fullName evidence="1">1D-myo-inositol 2-acetamido-2-deoxy-alpha-D-glucopyranoside deacetylase</fullName>
        <shortName evidence="1">GlcNAc-Ins deacetylase</shortName>
        <ecNumber evidence="1">3.5.1.103</ecNumber>
    </recommendedName>
    <alternativeName>
        <fullName>N-acetyl-1-D-myo-inositol 2-amino-2-deoxy-alpha-D-glucopyranoside deacetylase</fullName>
    </alternativeName>
</protein>
<accession>A1UKE3</accession>
<dbReference type="EC" id="3.5.1.103" evidence="1"/>
<dbReference type="EMBL" id="CP000518">
    <property type="protein sequence ID" value="ABL93301.1"/>
    <property type="molecule type" value="Genomic_DNA"/>
</dbReference>
<dbReference type="SMR" id="A1UKE3"/>
<dbReference type="STRING" id="189918.Mkms_4109"/>
<dbReference type="KEGG" id="mkm:Mkms_4109"/>
<dbReference type="HOGENOM" id="CLU_049311_2_1_11"/>
<dbReference type="OrthoDB" id="158614at2"/>
<dbReference type="GO" id="GO:0035595">
    <property type="term" value="F:N-acetylglucosaminylinositol deacetylase activity"/>
    <property type="evidence" value="ECO:0007669"/>
    <property type="project" value="UniProtKB-EC"/>
</dbReference>
<dbReference type="GO" id="GO:0008270">
    <property type="term" value="F:zinc ion binding"/>
    <property type="evidence" value="ECO:0007669"/>
    <property type="project" value="UniProtKB-UniRule"/>
</dbReference>
<dbReference type="GO" id="GO:0010125">
    <property type="term" value="P:mycothiol biosynthetic process"/>
    <property type="evidence" value="ECO:0007669"/>
    <property type="project" value="UniProtKB-UniRule"/>
</dbReference>
<dbReference type="Gene3D" id="3.40.50.10320">
    <property type="entry name" value="LmbE-like"/>
    <property type="match status" value="1"/>
</dbReference>
<dbReference type="HAMAP" id="MF_01696">
    <property type="entry name" value="MshB"/>
    <property type="match status" value="1"/>
</dbReference>
<dbReference type="InterPro" id="IPR003737">
    <property type="entry name" value="GlcNAc_PI_deacetylase-related"/>
</dbReference>
<dbReference type="InterPro" id="IPR024078">
    <property type="entry name" value="LmbE-like_dom_sf"/>
</dbReference>
<dbReference type="InterPro" id="IPR017810">
    <property type="entry name" value="Mycothiol_biosynthesis_MshB"/>
</dbReference>
<dbReference type="NCBIfam" id="TIGR03445">
    <property type="entry name" value="mycothiol_MshB"/>
    <property type="match status" value="1"/>
</dbReference>
<dbReference type="PANTHER" id="PTHR12993:SF26">
    <property type="entry name" value="1D-MYO-INOSITOL 2-ACETAMIDO-2-DEOXY-ALPHA-D-GLUCOPYRANOSIDE DEACETYLASE"/>
    <property type="match status" value="1"/>
</dbReference>
<dbReference type="PANTHER" id="PTHR12993">
    <property type="entry name" value="N-ACETYLGLUCOSAMINYL-PHOSPHATIDYLINOSITOL DE-N-ACETYLASE-RELATED"/>
    <property type="match status" value="1"/>
</dbReference>
<dbReference type="Pfam" id="PF02585">
    <property type="entry name" value="PIG-L"/>
    <property type="match status" value="1"/>
</dbReference>
<dbReference type="SUPFAM" id="SSF102588">
    <property type="entry name" value="LmbE-like"/>
    <property type="match status" value="1"/>
</dbReference>